<feature type="chain" id="PRO_0000168246" description="2-amino-4-hydroxy-6-hydroxymethyldihydropteridine pyrophosphokinase">
    <location>
        <begin position="1"/>
        <end position="160"/>
    </location>
</feature>
<proteinExistence type="inferred from homology"/>
<organism>
    <name type="scientific">Aquifex aeolicus (strain VF5)</name>
    <dbReference type="NCBI Taxonomy" id="224324"/>
    <lineage>
        <taxon>Bacteria</taxon>
        <taxon>Pseudomonadati</taxon>
        <taxon>Aquificota</taxon>
        <taxon>Aquificia</taxon>
        <taxon>Aquificales</taxon>
        <taxon>Aquificaceae</taxon>
        <taxon>Aquifex</taxon>
    </lineage>
</organism>
<protein>
    <recommendedName>
        <fullName evidence="1">2-amino-4-hydroxy-6-hydroxymethyldihydropteridine pyrophosphokinase</fullName>
        <ecNumber evidence="1">2.7.6.3</ecNumber>
    </recommendedName>
    <alternativeName>
        <fullName evidence="1">6-hydroxymethyl-7,8-dihydropterin pyrophosphokinase</fullName>
        <shortName evidence="1">PPPK</shortName>
    </alternativeName>
    <alternativeName>
        <fullName evidence="1">7,8-dihydro-6-hydroxymethylpterin-pyrophosphokinase</fullName>
        <shortName evidence="1">HPPK</shortName>
    </alternativeName>
</protein>
<comment type="function">
    <text evidence="1">Catalyzes the transfer of pyrophosphate from adenosine triphosphate (ATP) to 6-hydroxymethyl-7,8-dihydropterin, an enzymatic step in folate biosynthesis pathway.</text>
</comment>
<comment type="catalytic activity">
    <reaction evidence="1">
        <text>6-hydroxymethyl-7,8-dihydropterin + ATP = (7,8-dihydropterin-6-yl)methyl diphosphate + AMP + H(+)</text>
        <dbReference type="Rhea" id="RHEA:11412"/>
        <dbReference type="ChEBI" id="CHEBI:15378"/>
        <dbReference type="ChEBI" id="CHEBI:30616"/>
        <dbReference type="ChEBI" id="CHEBI:44841"/>
        <dbReference type="ChEBI" id="CHEBI:72950"/>
        <dbReference type="ChEBI" id="CHEBI:456215"/>
        <dbReference type="EC" id="2.7.6.3"/>
    </reaction>
</comment>
<comment type="pathway">
    <text evidence="1">Cofactor biosynthesis; tetrahydrofolate biosynthesis; 2-amino-4-hydroxy-6-hydroxymethyl-7,8-dihydropteridine diphosphate from 7,8-dihydroneopterin triphosphate: step 4/4.</text>
</comment>
<comment type="similarity">
    <text evidence="2">Belongs to the HPPK family.</text>
</comment>
<gene>
    <name type="primary">folK</name>
    <name type="ordered locus">aq_162</name>
</gene>
<dbReference type="EC" id="2.7.6.3" evidence="1"/>
<dbReference type="EMBL" id="AE000657">
    <property type="protein sequence ID" value="AAC06507.1"/>
    <property type="molecule type" value="Genomic_DNA"/>
</dbReference>
<dbReference type="PIR" id="C70315">
    <property type="entry name" value="C70315"/>
</dbReference>
<dbReference type="RefSeq" id="NP_213110.1">
    <property type="nucleotide sequence ID" value="NC_000918.1"/>
</dbReference>
<dbReference type="RefSeq" id="WP_010880048.1">
    <property type="nucleotide sequence ID" value="NC_000918.1"/>
</dbReference>
<dbReference type="SMR" id="O66550"/>
<dbReference type="FunCoup" id="O66550">
    <property type="interactions" value="350"/>
</dbReference>
<dbReference type="STRING" id="224324.aq_162"/>
<dbReference type="EnsemblBacteria" id="AAC06507">
    <property type="protein sequence ID" value="AAC06507"/>
    <property type="gene ID" value="aq_162"/>
</dbReference>
<dbReference type="KEGG" id="aae:aq_162"/>
<dbReference type="PATRIC" id="fig|224324.8.peg.139"/>
<dbReference type="eggNOG" id="COG0801">
    <property type="taxonomic scope" value="Bacteria"/>
</dbReference>
<dbReference type="HOGENOM" id="CLU_097916_1_2_0"/>
<dbReference type="InParanoid" id="O66550"/>
<dbReference type="OrthoDB" id="9808041at2"/>
<dbReference type="UniPathway" id="UPA00077">
    <property type="reaction ID" value="UER00155"/>
</dbReference>
<dbReference type="Proteomes" id="UP000000798">
    <property type="component" value="Chromosome"/>
</dbReference>
<dbReference type="GO" id="GO:0003848">
    <property type="term" value="F:2-amino-4-hydroxy-6-hydroxymethyldihydropteridine diphosphokinase activity"/>
    <property type="evidence" value="ECO:0007669"/>
    <property type="project" value="UniProtKB-EC"/>
</dbReference>
<dbReference type="GO" id="GO:0005524">
    <property type="term" value="F:ATP binding"/>
    <property type="evidence" value="ECO:0007669"/>
    <property type="project" value="UniProtKB-KW"/>
</dbReference>
<dbReference type="GO" id="GO:0016301">
    <property type="term" value="F:kinase activity"/>
    <property type="evidence" value="ECO:0007669"/>
    <property type="project" value="UniProtKB-KW"/>
</dbReference>
<dbReference type="GO" id="GO:0046656">
    <property type="term" value="P:folic acid biosynthetic process"/>
    <property type="evidence" value="ECO:0007669"/>
    <property type="project" value="UniProtKB-KW"/>
</dbReference>
<dbReference type="GO" id="GO:0046654">
    <property type="term" value="P:tetrahydrofolate biosynthetic process"/>
    <property type="evidence" value="ECO:0007669"/>
    <property type="project" value="UniProtKB-UniPathway"/>
</dbReference>
<dbReference type="CDD" id="cd00483">
    <property type="entry name" value="HPPK"/>
    <property type="match status" value="1"/>
</dbReference>
<dbReference type="Gene3D" id="3.30.70.560">
    <property type="entry name" value="7,8-Dihydro-6-hydroxymethylpterin-pyrophosphokinase HPPK"/>
    <property type="match status" value="1"/>
</dbReference>
<dbReference type="InterPro" id="IPR000550">
    <property type="entry name" value="Hppk"/>
</dbReference>
<dbReference type="InterPro" id="IPR035907">
    <property type="entry name" value="Hppk_sf"/>
</dbReference>
<dbReference type="NCBIfam" id="TIGR01498">
    <property type="entry name" value="folK"/>
    <property type="match status" value="1"/>
</dbReference>
<dbReference type="PANTHER" id="PTHR43071">
    <property type="entry name" value="2-AMINO-4-HYDROXY-6-HYDROXYMETHYLDIHYDROPTERIDINE PYROPHOSPHOKINASE"/>
    <property type="match status" value="1"/>
</dbReference>
<dbReference type="PANTHER" id="PTHR43071:SF1">
    <property type="entry name" value="2-AMINO-4-HYDROXY-6-HYDROXYMETHYLDIHYDROPTERIDINE PYROPHOSPHOKINASE"/>
    <property type="match status" value="1"/>
</dbReference>
<dbReference type="Pfam" id="PF01288">
    <property type="entry name" value="HPPK"/>
    <property type="match status" value="1"/>
</dbReference>
<dbReference type="SUPFAM" id="SSF55083">
    <property type="entry name" value="6-hydroxymethyl-7,8-dihydropterin pyrophosphokinase, HPPK"/>
    <property type="match status" value="1"/>
</dbReference>
<dbReference type="PROSITE" id="PS00794">
    <property type="entry name" value="HPPK"/>
    <property type="match status" value="1"/>
</dbReference>
<reference key="1">
    <citation type="journal article" date="1998" name="Nature">
        <title>The complete genome of the hyperthermophilic bacterium Aquifex aeolicus.</title>
        <authorList>
            <person name="Deckert G."/>
            <person name="Warren P.V."/>
            <person name="Gaasterland T."/>
            <person name="Young W.G."/>
            <person name="Lenox A.L."/>
            <person name="Graham D.E."/>
            <person name="Overbeek R."/>
            <person name="Snead M.A."/>
            <person name="Keller M."/>
            <person name="Aujay M."/>
            <person name="Huber R."/>
            <person name="Feldman R.A."/>
            <person name="Short J.M."/>
            <person name="Olsen G.J."/>
            <person name="Swanson R.V."/>
        </authorList>
    </citation>
    <scope>NUCLEOTIDE SEQUENCE [LARGE SCALE GENOMIC DNA]</scope>
    <source>
        <strain>VF5</strain>
    </source>
</reference>
<name>HPPK_AQUAE</name>
<sequence>MATVYLGLGSNVGDRISYILKAIEKLEEFLEIEKISTVYESKAWGFENQGNFLNFVLKAKTSLLPQELLLKIKKVEKEVGRKERFKWGPREIDIDILLYKDEVIRTKLLKVPHPFLEKRDFFVYPLLEIEPNVIHPIYRKPLKEFKPENTLKPFCCILKV</sequence>
<keyword id="KW-0067">ATP-binding</keyword>
<keyword id="KW-0289">Folate biosynthesis</keyword>
<keyword id="KW-0418">Kinase</keyword>
<keyword id="KW-0547">Nucleotide-binding</keyword>
<keyword id="KW-1185">Reference proteome</keyword>
<keyword id="KW-0808">Transferase</keyword>
<accession>O66550</accession>
<evidence type="ECO:0000250" key="1">
    <source>
        <dbReference type="UniProtKB" id="P26281"/>
    </source>
</evidence>
<evidence type="ECO:0000305" key="2"/>